<reference evidence="8" key="1">
    <citation type="journal article" date="2007" name="J. Mass Spectrom.">
        <title>Characterization of antimicrobial histone sequences and posttranslational modifications by mass spectrometry.</title>
        <authorList>
            <person name="Ouvry-Patat S.A."/>
            <person name="Schey K.L."/>
        </authorList>
    </citation>
    <scope>PROTEIN SEQUENCE</scope>
    <scope>MASS SPECTROMETRY</scope>
    <scope>ACETYLATION AT LYS-4; LYS-11 AND LYS-14</scope>
    <source>
        <tissue evidence="6">Hemocyte</tissue>
    </source>
</reference>
<reference evidence="8" key="2">
    <citation type="journal article" date="2004" name="Eur. J. Biochem.">
        <title>Antimicrobial activity of histones from hemocytes of the Pacific white shrimp.</title>
        <authorList>
            <person name="Patat S.A."/>
            <person name="Carnegie R.B."/>
            <person name="Kingsbury C."/>
            <person name="Gross P.S."/>
            <person name="Chapman R."/>
            <person name="Schey K.L."/>
        </authorList>
    </citation>
    <scope>PROTEIN SEQUENCE OF 49-63 AND 75-112</scope>
    <scope>FUNCTION</scope>
    <scope>MASS SPECTROMETRY</scope>
    <source>
        <tissue evidence="5">Hemocyte</tissue>
    </source>
</reference>
<protein>
    <recommendedName>
        <fullName>Histone H2B</fullName>
    </recommendedName>
</protein>
<name>H2B_PENVA</name>
<organism>
    <name type="scientific">Penaeus vannamei</name>
    <name type="common">Whiteleg shrimp</name>
    <name type="synonym">Litopenaeus vannamei</name>
    <dbReference type="NCBI Taxonomy" id="6689"/>
    <lineage>
        <taxon>Eukaryota</taxon>
        <taxon>Metazoa</taxon>
        <taxon>Ecdysozoa</taxon>
        <taxon>Arthropoda</taxon>
        <taxon>Crustacea</taxon>
        <taxon>Multicrustacea</taxon>
        <taxon>Malacostraca</taxon>
        <taxon>Eumalacostraca</taxon>
        <taxon>Eucarida</taxon>
        <taxon>Decapoda</taxon>
        <taxon>Dendrobranchiata</taxon>
        <taxon>Penaeoidea</taxon>
        <taxon>Penaeidae</taxon>
        <taxon>Penaeus</taxon>
    </lineage>
</organism>
<keyword id="KW-0007">Acetylation</keyword>
<keyword id="KW-0044">Antibiotic</keyword>
<keyword id="KW-0929">Antimicrobial</keyword>
<keyword id="KW-0158">Chromosome</keyword>
<keyword id="KW-0903">Direct protein sequencing</keyword>
<keyword id="KW-0238">DNA-binding</keyword>
<keyword id="KW-0325">Glycoprotein</keyword>
<keyword id="KW-1017">Isopeptide bond</keyword>
<keyword id="KW-0544">Nucleosome core</keyword>
<keyword id="KW-0539">Nucleus</keyword>
<keyword id="KW-0832">Ubl conjugation</keyword>
<dbReference type="SMR" id="P83863"/>
<dbReference type="iPTMnet" id="P83863"/>
<dbReference type="OrthoDB" id="6351868at2759"/>
<dbReference type="GO" id="GO:0000786">
    <property type="term" value="C:nucleosome"/>
    <property type="evidence" value="ECO:0007669"/>
    <property type="project" value="UniProtKB-KW"/>
</dbReference>
<dbReference type="GO" id="GO:0005634">
    <property type="term" value="C:nucleus"/>
    <property type="evidence" value="ECO:0007669"/>
    <property type="project" value="UniProtKB-SubCell"/>
</dbReference>
<dbReference type="GO" id="GO:0003677">
    <property type="term" value="F:DNA binding"/>
    <property type="evidence" value="ECO:0007669"/>
    <property type="project" value="UniProtKB-KW"/>
</dbReference>
<dbReference type="GO" id="GO:0046982">
    <property type="term" value="F:protein heterodimerization activity"/>
    <property type="evidence" value="ECO:0007669"/>
    <property type="project" value="InterPro"/>
</dbReference>
<dbReference type="GO" id="GO:0044877">
    <property type="term" value="F:protein-containing complex binding"/>
    <property type="evidence" value="ECO:0000250"/>
    <property type="project" value="UniProtKB"/>
</dbReference>
<dbReference type="GO" id="GO:0030527">
    <property type="term" value="F:structural constituent of chromatin"/>
    <property type="evidence" value="ECO:0007669"/>
    <property type="project" value="InterPro"/>
</dbReference>
<dbReference type="GO" id="GO:0042742">
    <property type="term" value="P:defense response to bacterium"/>
    <property type="evidence" value="ECO:0000314"/>
    <property type="project" value="UniProtKB"/>
</dbReference>
<dbReference type="CDD" id="cd22910">
    <property type="entry name" value="HFD_H2B"/>
    <property type="match status" value="1"/>
</dbReference>
<dbReference type="FunFam" id="1.10.20.10:FF:000016">
    <property type="entry name" value="Histone H2B"/>
    <property type="match status" value="1"/>
</dbReference>
<dbReference type="Gene3D" id="1.10.20.10">
    <property type="entry name" value="Histone, subunit A"/>
    <property type="match status" value="1"/>
</dbReference>
<dbReference type="InterPro" id="IPR009072">
    <property type="entry name" value="Histone-fold"/>
</dbReference>
<dbReference type="InterPro" id="IPR007125">
    <property type="entry name" value="Histone_H2A/H2B/H3"/>
</dbReference>
<dbReference type="InterPro" id="IPR000558">
    <property type="entry name" value="Histone_H2B"/>
</dbReference>
<dbReference type="InterPro" id="IPR055333">
    <property type="entry name" value="HISTONE_H2B_site"/>
</dbReference>
<dbReference type="PANTHER" id="PTHR23428">
    <property type="entry name" value="HISTONE H2B"/>
    <property type="match status" value="1"/>
</dbReference>
<dbReference type="Pfam" id="PF00125">
    <property type="entry name" value="Histone"/>
    <property type="match status" value="1"/>
</dbReference>
<dbReference type="PRINTS" id="PR00621">
    <property type="entry name" value="HISTONEH2B"/>
</dbReference>
<dbReference type="SMART" id="SM00427">
    <property type="entry name" value="H2B"/>
    <property type="match status" value="1"/>
</dbReference>
<dbReference type="SUPFAM" id="SSF47113">
    <property type="entry name" value="Histone-fold"/>
    <property type="match status" value="1"/>
</dbReference>
<dbReference type="PROSITE" id="PS00357">
    <property type="entry name" value="HISTONE_H2B"/>
    <property type="match status" value="1"/>
</dbReference>
<comment type="function">
    <text evidence="5">Core component of nucleosome. Nucleosomes wrap and compact DNA into chromatin, limiting DNA accessibility to the cellular machineries which require DNA as a template. Histones thereby play a central role in transcription regulation, DNA repair, DNA replication and chromosomal stability. DNA accessibility is regulated via a complex set of post-translational modifications of histones, also called histone code, and nucleosome remodeling.</text>
</comment>
<comment type="function">
    <text evidence="5">A mixture of histones H2B and H4 has antimicrobial activity against the Gram-positive bacterium M.luteus.</text>
</comment>
<comment type="subunit">
    <text evidence="8">The nucleosome is a histone octamer containing two molecules each of H2A, H2B, H3 and H4 assembled in one H3-H4 heterotetramer and two H2A-H2B heterodimers. The octamer wraps approximately 147 bp of DNA.</text>
</comment>
<comment type="subcellular location">
    <subcellularLocation>
        <location evidence="8">Nucleus</location>
    </subcellularLocation>
    <subcellularLocation>
        <location>Chromosome</location>
    </subcellularLocation>
</comment>
<comment type="PTM">
    <text evidence="2">Monoubiquitination gives a specific tag for epigenetic transcriptional activation and is also prerequisite for histone H3 'Lys-4' and 'Lys-79' methylation.</text>
</comment>
<comment type="PTM">
    <text evidence="1">GlcNAcylation at Ser-103 promotes monoubiquitination of Lys-111. It fluctuates in response to extracellular glucose, and associates with transcribed genes (By similarity).</text>
</comment>
<comment type="mass spectrometry" mass="13554.0" method="MALDI" evidence="5"/>
<comment type="mass spectrometry" mass="13570.0" method="MALDI" evidence="6"/>
<comment type="similarity">
    <text evidence="3">Belongs to the histone H2B family.</text>
</comment>
<evidence type="ECO:0000250" key="1"/>
<evidence type="ECO:0000250" key="2">
    <source>
        <dbReference type="UniProtKB" id="P33778"/>
    </source>
</evidence>
<evidence type="ECO:0000255" key="3"/>
<evidence type="ECO:0000256" key="4">
    <source>
        <dbReference type="SAM" id="MobiDB-lite"/>
    </source>
</evidence>
<evidence type="ECO:0000269" key="5">
    <source>
    </source>
</evidence>
<evidence type="ECO:0000269" key="6">
    <source>
    </source>
</evidence>
<evidence type="ECO:0000303" key="7">
    <source>
    </source>
</evidence>
<evidence type="ECO:0000305" key="8"/>
<proteinExistence type="evidence at protein level"/>
<sequence length="116" mass="12775">TSGKAAKKAGKAQKSITKGDKKKRKESYSIYIYKVLKQVHPDTGISSKAMSIMNSFVNDIFERIAAEASRLAHYNKRSTITSREIQTAVRLLLPGELAKHAVSEGTKAVTKYTSSK</sequence>
<accession>P83863</accession>
<feature type="chain" id="PRO_0000071878" description="Histone H2B">
    <location>
        <begin position="1" status="less than"/>
        <end position="116"/>
    </location>
</feature>
<feature type="region of interest" description="Disordered" evidence="4">
    <location>
        <begin position="1"/>
        <end position="25"/>
    </location>
</feature>
<feature type="compositionally biased region" description="Basic residues" evidence="4">
    <location>
        <begin position="1"/>
        <end position="11"/>
    </location>
</feature>
<feature type="modified residue" description="N6-acetyllysine" evidence="6">
    <location>
        <position position="4"/>
    </location>
</feature>
<feature type="modified residue" description="N6-acetyllysine" evidence="6">
    <location>
        <position position="11"/>
    </location>
</feature>
<feature type="modified residue" description="N6-acetyllysine" evidence="6">
    <location>
        <position position="14"/>
    </location>
</feature>
<feature type="glycosylation site" description="O-linked (GlcNAc) serine" evidence="1">
    <location>
        <position position="103"/>
    </location>
</feature>
<feature type="cross-link" description="Glycyl lysine isopeptide (Lys-Gly) (interchain with G-Cter in ubiquitin)" evidence="2">
    <location>
        <position position="111"/>
    </location>
</feature>
<feature type="non-consecutive residues" evidence="7">
    <location>
        <begin position="23"/>
        <end position="24"/>
    </location>
</feature>
<feature type="non-terminal residue" evidence="7">
    <location>
        <position position="1"/>
    </location>
</feature>